<keyword id="KW-0002">3D-structure</keyword>
<keyword id="KW-0053">Apoptosis</keyword>
<keyword id="KW-0963">Cytoplasm</keyword>
<keyword id="KW-1017">Isopeptide bond</keyword>
<keyword id="KW-0539">Nucleus</keyword>
<keyword id="KW-0597">Phosphoprotein</keyword>
<keyword id="KW-1185">Reference proteome</keyword>
<keyword id="KW-0804">Transcription</keyword>
<keyword id="KW-0805">Transcription regulation</keyword>
<keyword id="KW-0832">Ubl conjugation</keyword>
<accession>Q9D0M2</accession>
<accession>Q3TIS1</accession>
<accession>Q3U511</accession>
<accession>Q6NZE5</accession>
<accession>Q8C1A0</accession>
<organism>
    <name type="scientific">Mus musculus</name>
    <name type="common">Mouse</name>
    <dbReference type="NCBI Taxonomy" id="10090"/>
    <lineage>
        <taxon>Eukaryota</taxon>
        <taxon>Metazoa</taxon>
        <taxon>Chordata</taxon>
        <taxon>Craniata</taxon>
        <taxon>Vertebrata</taxon>
        <taxon>Euteleostomi</taxon>
        <taxon>Mammalia</taxon>
        <taxon>Eutheria</taxon>
        <taxon>Euarchontoglires</taxon>
        <taxon>Glires</taxon>
        <taxon>Rodentia</taxon>
        <taxon>Myomorpha</taxon>
        <taxon>Muroidea</taxon>
        <taxon>Muridae</taxon>
        <taxon>Murinae</taxon>
        <taxon>Mus</taxon>
        <taxon>Mus</taxon>
    </lineage>
</organism>
<proteinExistence type="evidence at protein level"/>
<protein>
    <recommendedName>
        <fullName>Cell division cycle-associated protein 7</fullName>
    </recommendedName>
</protein>
<reference key="1">
    <citation type="journal article" date="2005" name="Science">
        <title>The transcriptional landscape of the mammalian genome.</title>
        <authorList>
            <person name="Carninci P."/>
            <person name="Kasukawa T."/>
            <person name="Katayama S."/>
            <person name="Gough J."/>
            <person name="Frith M.C."/>
            <person name="Maeda N."/>
            <person name="Oyama R."/>
            <person name="Ravasi T."/>
            <person name="Lenhard B."/>
            <person name="Wells C."/>
            <person name="Kodzius R."/>
            <person name="Shimokawa K."/>
            <person name="Bajic V.B."/>
            <person name="Brenner S.E."/>
            <person name="Batalov S."/>
            <person name="Forrest A.R."/>
            <person name="Zavolan M."/>
            <person name="Davis M.J."/>
            <person name="Wilming L.G."/>
            <person name="Aidinis V."/>
            <person name="Allen J.E."/>
            <person name="Ambesi-Impiombato A."/>
            <person name="Apweiler R."/>
            <person name="Aturaliya R.N."/>
            <person name="Bailey T.L."/>
            <person name="Bansal M."/>
            <person name="Baxter L."/>
            <person name="Beisel K.W."/>
            <person name="Bersano T."/>
            <person name="Bono H."/>
            <person name="Chalk A.M."/>
            <person name="Chiu K.P."/>
            <person name="Choudhary V."/>
            <person name="Christoffels A."/>
            <person name="Clutterbuck D.R."/>
            <person name="Crowe M.L."/>
            <person name="Dalla E."/>
            <person name="Dalrymple B.P."/>
            <person name="de Bono B."/>
            <person name="Della Gatta G."/>
            <person name="di Bernardo D."/>
            <person name="Down T."/>
            <person name="Engstrom P."/>
            <person name="Fagiolini M."/>
            <person name="Faulkner G."/>
            <person name="Fletcher C.F."/>
            <person name="Fukushima T."/>
            <person name="Furuno M."/>
            <person name="Futaki S."/>
            <person name="Gariboldi M."/>
            <person name="Georgii-Hemming P."/>
            <person name="Gingeras T.R."/>
            <person name="Gojobori T."/>
            <person name="Green R.E."/>
            <person name="Gustincich S."/>
            <person name="Harbers M."/>
            <person name="Hayashi Y."/>
            <person name="Hensch T.K."/>
            <person name="Hirokawa N."/>
            <person name="Hill D."/>
            <person name="Huminiecki L."/>
            <person name="Iacono M."/>
            <person name="Ikeo K."/>
            <person name="Iwama A."/>
            <person name="Ishikawa T."/>
            <person name="Jakt M."/>
            <person name="Kanapin A."/>
            <person name="Katoh M."/>
            <person name="Kawasawa Y."/>
            <person name="Kelso J."/>
            <person name="Kitamura H."/>
            <person name="Kitano H."/>
            <person name="Kollias G."/>
            <person name="Krishnan S.P."/>
            <person name="Kruger A."/>
            <person name="Kummerfeld S.K."/>
            <person name="Kurochkin I.V."/>
            <person name="Lareau L.F."/>
            <person name="Lazarevic D."/>
            <person name="Lipovich L."/>
            <person name="Liu J."/>
            <person name="Liuni S."/>
            <person name="McWilliam S."/>
            <person name="Madan Babu M."/>
            <person name="Madera M."/>
            <person name="Marchionni L."/>
            <person name="Matsuda H."/>
            <person name="Matsuzawa S."/>
            <person name="Miki H."/>
            <person name="Mignone F."/>
            <person name="Miyake S."/>
            <person name="Morris K."/>
            <person name="Mottagui-Tabar S."/>
            <person name="Mulder N."/>
            <person name="Nakano N."/>
            <person name="Nakauchi H."/>
            <person name="Ng P."/>
            <person name="Nilsson R."/>
            <person name="Nishiguchi S."/>
            <person name="Nishikawa S."/>
            <person name="Nori F."/>
            <person name="Ohara O."/>
            <person name="Okazaki Y."/>
            <person name="Orlando V."/>
            <person name="Pang K.C."/>
            <person name="Pavan W.J."/>
            <person name="Pavesi G."/>
            <person name="Pesole G."/>
            <person name="Petrovsky N."/>
            <person name="Piazza S."/>
            <person name="Reed J."/>
            <person name="Reid J.F."/>
            <person name="Ring B.Z."/>
            <person name="Ringwald M."/>
            <person name="Rost B."/>
            <person name="Ruan Y."/>
            <person name="Salzberg S.L."/>
            <person name="Sandelin A."/>
            <person name="Schneider C."/>
            <person name="Schoenbach C."/>
            <person name="Sekiguchi K."/>
            <person name="Semple C.A."/>
            <person name="Seno S."/>
            <person name="Sessa L."/>
            <person name="Sheng Y."/>
            <person name="Shibata Y."/>
            <person name="Shimada H."/>
            <person name="Shimada K."/>
            <person name="Silva D."/>
            <person name="Sinclair B."/>
            <person name="Sperling S."/>
            <person name="Stupka E."/>
            <person name="Sugiura K."/>
            <person name="Sultana R."/>
            <person name="Takenaka Y."/>
            <person name="Taki K."/>
            <person name="Tammoja K."/>
            <person name="Tan S.L."/>
            <person name="Tang S."/>
            <person name="Taylor M.S."/>
            <person name="Tegner J."/>
            <person name="Teichmann S.A."/>
            <person name="Ueda H.R."/>
            <person name="van Nimwegen E."/>
            <person name="Verardo R."/>
            <person name="Wei C.L."/>
            <person name="Yagi K."/>
            <person name="Yamanishi H."/>
            <person name="Zabarovsky E."/>
            <person name="Zhu S."/>
            <person name="Zimmer A."/>
            <person name="Hide W."/>
            <person name="Bult C."/>
            <person name="Grimmond S.M."/>
            <person name="Teasdale R.D."/>
            <person name="Liu E.T."/>
            <person name="Brusic V."/>
            <person name="Quackenbush J."/>
            <person name="Wahlestedt C."/>
            <person name="Mattick J.S."/>
            <person name="Hume D.A."/>
            <person name="Kai C."/>
            <person name="Sasaki D."/>
            <person name="Tomaru Y."/>
            <person name="Fukuda S."/>
            <person name="Kanamori-Katayama M."/>
            <person name="Suzuki M."/>
            <person name="Aoki J."/>
            <person name="Arakawa T."/>
            <person name="Iida J."/>
            <person name="Imamura K."/>
            <person name="Itoh M."/>
            <person name="Kato T."/>
            <person name="Kawaji H."/>
            <person name="Kawagashira N."/>
            <person name="Kawashima T."/>
            <person name="Kojima M."/>
            <person name="Kondo S."/>
            <person name="Konno H."/>
            <person name="Nakano K."/>
            <person name="Ninomiya N."/>
            <person name="Nishio T."/>
            <person name="Okada M."/>
            <person name="Plessy C."/>
            <person name="Shibata K."/>
            <person name="Shiraki T."/>
            <person name="Suzuki S."/>
            <person name="Tagami M."/>
            <person name="Waki K."/>
            <person name="Watahiki A."/>
            <person name="Okamura-Oho Y."/>
            <person name="Suzuki H."/>
            <person name="Kawai J."/>
            <person name="Hayashizaki Y."/>
        </authorList>
    </citation>
    <scope>NUCLEOTIDE SEQUENCE [LARGE SCALE MRNA]</scope>
    <source>
        <strain>C57BL/6J</strain>
        <tissue>Embryo</tissue>
        <tissue>Placenta</tissue>
        <tissue>Skin</tissue>
        <tissue>Thymus</tissue>
        <tissue>Tongue</tissue>
    </source>
</reference>
<reference key="2">
    <citation type="journal article" date="2004" name="Genome Res.">
        <title>The status, quality, and expansion of the NIH full-length cDNA project: the Mammalian Gene Collection (MGC).</title>
        <authorList>
            <consortium name="The MGC Project Team"/>
        </authorList>
    </citation>
    <scope>NUCLEOTIDE SEQUENCE [LARGE SCALE MRNA]</scope>
    <source>
        <strain>C57BL/6J</strain>
        <tissue>Egg</tissue>
    </source>
</reference>
<reference key="3">
    <citation type="journal article" date="2004" name="Mol. Cell. Proteomics">
        <title>Phosphoproteomic analysis of the developing mouse brain.</title>
        <authorList>
            <person name="Ballif B.A."/>
            <person name="Villen J."/>
            <person name="Beausoleil S.A."/>
            <person name="Schwartz D."/>
            <person name="Gygi S.P."/>
        </authorList>
    </citation>
    <scope>PHOSPHORYLATION [LARGE SCALE ANALYSIS] AT THR-203</scope>
    <scope>IDENTIFICATION BY MASS SPECTROMETRY [LARGE SCALE ANALYSIS]</scope>
    <source>
        <tissue>Embryonic brain</tissue>
    </source>
</reference>
<reference key="4">
    <citation type="journal article" date="2005" name="Cancer Res.">
        <title>The Myc target gene JPO1/CDCA7 is frequently overexpressed in human tumors and has limited transforming activity in vivo.</title>
        <authorList>
            <person name="Osthus R.C."/>
            <person name="Karim B."/>
            <person name="Prescott J.E."/>
            <person name="Smith B.D."/>
            <person name="McDevitt M."/>
            <person name="Huso D.L."/>
            <person name="Dang C.V."/>
        </authorList>
    </citation>
    <scope>TRANSGENIC MICE</scope>
</reference>
<reference key="5">
    <citation type="journal article" date="2006" name="Biochim. Biophys. Acta">
        <title>JPO1/CDCA7, a novel transcription factor E2F1-induced protein, possesses intrinsic transcriptional regulator activity.</title>
        <authorList>
            <person name="Goto Y."/>
            <person name="Hayashi R."/>
            <person name="Muramatsu T."/>
            <person name="Ogawa H."/>
            <person name="Eguchi I."/>
            <person name="Oshida Y."/>
            <person name="Ohtani K."/>
            <person name="Yoshida K."/>
        </authorList>
    </citation>
    <scope>FUNCTION</scope>
</reference>
<reference key="6">
    <citation type="journal article" date="2010" name="Cell">
        <title>A tissue-specific atlas of mouse protein phosphorylation and expression.</title>
        <authorList>
            <person name="Huttlin E.L."/>
            <person name="Jedrychowski M.P."/>
            <person name="Elias J.E."/>
            <person name="Goswami T."/>
            <person name="Rad R."/>
            <person name="Beausoleil S.A."/>
            <person name="Villen J."/>
            <person name="Haas W."/>
            <person name="Sowa M.E."/>
            <person name="Gygi S.P."/>
        </authorList>
    </citation>
    <scope>PHOSPHORYLATION [LARGE SCALE ANALYSIS] AT SER-225</scope>
    <scope>IDENTIFICATION BY MASS SPECTROMETRY [LARGE SCALE ANALYSIS]</scope>
    <source>
        <tissue>Lung</tissue>
        <tissue>Spleen</tissue>
    </source>
</reference>
<gene>
    <name type="primary">Cdca7</name>
</gene>
<dbReference type="EMBL" id="AK011289">
    <property type="protein sequence ID" value="BAB27519.1"/>
    <property type="molecule type" value="mRNA"/>
</dbReference>
<dbReference type="EMBL" id="AK028671">
    <property type="protein sequence ID" value="BAC26058.1"/>
    <property type="molecule type" value="mRNA"/>
</dbReference>
<dbReference type="EMBL" id="AK075882">
    <property type="protein sequence ID" value="BAC36027.1"/>
    <property type="molecule type" value="mRNA"/>
</dbReference>
<dbReference type="EMBL" id="AK153943">
    <property type="protein sequence ID" value="BAE32269.1"/>
    <property type="molecule type" value="mRNA"/>
</dbReference>
<dbReference type="EMBL" id="AK167734">
    <property type="protein sequence ID" value="BAE39775.1"/>
    <property type="molecule type" value="mRNA"/>
</dbReference>
<dbReference type="EMBL" id="BC066169">
    <property type="protein sequence ID" value="AAH66169.1"/>
    <property type="molecule type" value="mRNA"/>
</dbReference>
<dbReference type="CCDS" id="CCDS16121.1"/>
<dbReference type="RefSeq" id="NP_080142.1">
    <property type="nucleotide sequence ID" value="NM_025866.4"/>
</dbReference>
<dbReference type="PDB" id="8TLE">
    <property type="method" value="X-ray"/>
    <property type="resolution" value="2.08 A"/>
    <property type="chains" value="A=242-382"/>
</dbReference>
<dbReference type="PDB" id="8TLF">
    <property type="method" value="X-ray"/>
    <property type="resolution" value="1.64 A"/>
    <property type="chains" value="A/B=242-382"/>
</dbReference>
<dbReference type="PDB" id="8TLG">
    <property type="method" value="X-ray"/>
    <property type="resolution" value="2.09 A"/>
    <property type="chains" value="A=242-382"/>
</dbReference>
<dbReference type="PDB" id="8TLH">
    <property type="method" value="X-ray"/>
    <property type="resolution" value="1.94 A"/>
    <property type="chains" value="A/B=242-382"/>
</dbReference>
<dbReference type="PDB" id="8TLJ">
    <property type="method" value="X-ray"/>
    <property type="resolution" value="2.30 A"/>
    <property type="chains" value="A/B=242-382"/>
</dbReference>
<dbReference type="PDB" id="8TLL">
    <property type="method" value="X-ray"/>
    <property type="resolution" value="2.58 A"/>
    <property type="chains" value="A/B=242-382"/>
</dbReference>
<dbReference type="PDBsum" id="8TLE"/>
<dbReference type="PDBsum" id="8TLF"/>
<dbReference type="PDBsum" id="8TLG"/>
<dbReference type="PDBsum" id="8TLH"/>
<dbReference type="PDBsum" id="8TLJ"/>
<dbReference type="PDBsum" id="8TLL"/>
<dbReference type="SMR" id="Q9D0M2"/>
<dbReference type="BioGRID" id="211833">
    <property type="interactions" value="2"/>
</dbReference>
<dbReference type="FunCoup" id="Q9D0M2">
    <property type="interactions" value="2990"/>
</dbReference>
<dbReference type="STRING" id="10090.ENSMUSP00000099752"/>
<dbReference type="iPTMnet" id="Q9D0M2"/>
<dbReference type="PhosphoSitePlus" id="Q9D0M2"/>
<dbReference type="jPOST" id="Q9D0M2"/>
<dbReference type="PaxDb" id="10090-ENSMUSP00000099752"/>
<dbReference type="PeptideAtlas" id="Q9D0M2"/>
<dbReference type="ProteomicsDB" id="281279"/>
<dbReference type="Antibodypedia" id="1585">
    <property type="antibodies" value="102 antibodies from 23 providers"/>
</dbReference>
<dbReference type="DNASU" id="66953"/>
<dbReference type="Ensembl" id="ENSMUST00000102691.11">
    <property type="protein sequence ID" value="ENSMUSP00000099752.5"/>
    <property type="gene ID" value="ENSMUSG00000055612.16"/>
</dbReference>
<dbReference type="GeneID" id="66953"/>
<dbReference type="KEGG" id="mmu:66953"/>
<dbReference type="UCSC" id="uc008kbx.1">
    <property type="organism name" value="mouse"/>
</dbReference>
<dbReference type="AGR" id="MGI:1914203"/>
<dbReference type="CTD" id="83879"/>
<dbReference type="MGI" id="MGI:1914203">
    <property type="gene designation" value="Cdca7"/>
</dbReference>
<dbReference type="VEuPathDB" id="HostDB:ENSMUSG00000055612"/>
<dbReference type="eggNOG" id="ENOG502QQPE">
    <property type="taxonomic scope" value="Eukaryota"/>
</dbReference>
<dbReference type="GeneTree" id="ENSGT00940000155436"/>
<dbReference type="HOGENOM" id="CLU_035988_2_0_1"/>
<dbReference type="InParanoid" id="Q9D0M2"/>
<dbReference type="OMA" id="DCWGIRG"/>
<dbReference type="OrthoDB" id="298344at2759"/>
<dbReference type="PhylomeDB" id="Q9D0M2"/>
<dbReference type="TreeFam" id="TF101076"/>
<dbReference type="BioGRID-ORCS" id="66953">
    <property type="hits" value="3 hits in 79 CRISPR screens"/>
</dbReference>
<dbReference type="ChiTaRS" id="Cdca7">
    <property type="organism name" value="mouse"/>
</dbReference>
<dbReference type="PRO" id="PR:Q9D0M2"/>
<dbReference type="Proteomes" id="UP000000589">
    <property type="component" value="Chromosome 2"/>
</dbReference>
<dbReference type="RNAct" id="Q9D0M2">
    <property type="molecule type" value="protein"/>
</dbReference>
<dbReference type="Bgee" id="ENSMUSG00000055612">
    <property type="expression patterns" value="Expressed in ventricular zone and 212 other cell types or tissues"/>
</dbReference>
<dbReference type="ExpressionAtlas" id="Q9D0M2">
    <property type="expression patterns" value="baseline and differential"/>
</dbReference>
<dbReference type="GO" id="GO:0005829">
    <property type="term" value="C:cytosol"/>
    <property type="evidence" value="ECO:0007669"/>
    <property type="project" value="Ensembl"/>
</dbReference>
<dbReference type="GO" id="GO:0005654">
    <property type="term" value="C:nucleoplasm"/>
    <property type="evidence" value="ECO:0007669"/>
    <property type="project" value="Ensembl"/>
</dbReference>
<dbReference type="GO" id="GO:0005634">
    <property type="term" value="C:nucleus"/>
    <property type="evidence" value="ECO:0000266"/>
    <property type="project" value="MGI"/>
</dbReference>
<dbReference type="GO" id="GO:0006915">
    <property type="term" value="P:apoptotic process"/>
    <property type="evidence" value="ECO:0007669"/>
    <property type="project" value="UniProtKB-KW"/>
</dbReference>
<dbReference type="GO" id="GO:0042127">
    <property type="term" value="P:regulation of cell population proliferation"/>
    <property type="evidence" value="ECO:0000266"/>
    <property type="project" value="MGI"/>
</dbReference>
<dbReference type="GO" id="GO:0006355">
    <property type="term" value="P:regulation of DNA-templated transcription"/>
    <property type="evidence" value="ECO:0007669"/>
    <property type="project" value="InterPro"/>
</dbReference>
<dbReference type="InterPro" id="IPR040221">
    <property type="entry name" value="CDCA7/CDA7L"/>
</dbReference>
<dbReference type="InterPro" id="IPR018866">
    <property type="entry name" value="Znf-4CXXC_R1"/>
</dbReference>
<dbReference type="PANTHER" id="PTHR31169:SF2">
    <property type="entry name" value="CELL DIVISION CYCLE-ASSOCIATED PROTEIN 7"/>
    <property type="match status" value="1"/>
</dbReference>
<dbReference type="PANTHER" id="PTHR31169">
    <property type="entry name" value="OS05G0300700 PROTEIN"/>
    <property type="match status" value="1"/>
</dbReference>
<dbReference type="Pfam" id="PF10497">
    <property type="entry name" value="zf-4CXXC_R1"/>
    <property type="match status" value="1"/>
</dbReference>
<comment type="function">
    <text evidence="1 4">Participates in MYC-mediated cell transformation and apoptosis; induces anchorage-independent growth and clonogenicity in lymphoblastoid cells. Insufficient to induce tumorigenicity when overexpressed but contributes to MYC-mediated tumorigenesis. May play a role as transcriptional regulator (By similarity).</text>
</comment>
<comment type="subunit">
    <text evidence="1">Interacts with MYC (via C-terminus), YWHAE and YWHAZ.</text>
</comment>
<comment type="subcellular location">
    <subcellularLocation>
        <location evidence="1">Nucleus</location>
    </subcellularLocation>
    <subcellularLocation>
        <location evidence="1">Cytoplasm</location>
    </subcellularLocation>
    <text evidence="1">Predominantly nuclear with some expression also seen in the cytoplasm. Predominantly cytoplasmic when phosphorylated at Thr-170 (By similarity).</text>
</comment>
<comment type="PTM">
    <text evidence="1">Phosphorylation at Thr-170 promotes interaction with YWHAE and YWHAZ, dissociation from MYC and sequestration in the cytoplasm.</text>
</comment>
<comment type="miscellaneous">
    <text>Transgenic mice overexpress Cdca7 in both T- and B-cell compartments. At 1 year of age, they exhibit elevated incidence of lymphomas, significant increased frequency of solid tumors and a 2-fold increased risk of lymphoid malignancies compared to their littermates.</text>
</comment>
<sequence length="382" mass="43837">MEARRARQKALKVKNLKDVRYMKLISMETSSSSDDSCDSFASDNFANTRLQLNREGCRTRSQCRHSGPLRVAMKFPARNTRRAASKKAAPPKPSESSANDSHSDSEEEEEEEEEEDGMNFLEKRALNIKQNKAMLAKLMSELESFPGLFSGRHSLPGHRAKDSKSPRRRTFPGVATRRNPERRTRPLTRSRSRILGSLGALPTEEEEEEEEEEEDKYMLVRQRKSMDSYMNDDDVPRSRRPGSMTLPHIIRPVEEVTEEEIRNICSNSREKIYNRSLGSTCHQCRQKTTDTKTNCRNPDCWGIRGQFCGPCLRNRYGEEVKDALLDPNWHCPPCRGICNCSFCRQRDGRCATGVLVYLAKYHGFGNVHAYLKSLKQEFEMQA</sequence>
<evidence type="ECO:0000250" key="1"/>
<evidence type="ECO:0000250" key="2">
    <source>
        <dbReference type="UniProtKB" id="Q9BWT1"/>
    </source>
</evidence>
<evidence type="ECO:0000256" key="3">
    <source>
        <dbReference type="SAM" id="MobiDB-lite"/>
    </source>
</evidence>
<evidence type="ECO:0000269" key="4">
    <source>
    </source>
</evidence>
<evidence type="ECO:0000305" key="5"/>
<evidence type="ECO:0007744" key="6">
    <source>
    </source>
</evidence>
<evidence type="ECO:0007744" key="7">
    <source>
    </source>
</evidence>
<evidence type="ECO:0007829" key="8">
    <source>
        <dbReference type="PDB" id="8TLF"/>
    </source>
</evidence>
<feature type="chain" id="PRO_0000249311" description="Cell division cycle-associated protein 7">
    <location>
        <begin position="1"/>
        <end position="382"/>
    </location>
</feature>
<feature type="region of interest" description="Disordered" evidence="3">
    <location>
        <begin position="68"/>
        <end position="118"/>
    </location>
</feature>
<feature type="region of interest" description="Disordered" evidence="3">
    <location>
        <begin position="151"/>
        <end position="217"/>
    </location>
</feature>
<feature type="region of interest" description="Interaction with MYC" evidence="1">
    <location>
        <begin position="152"/>
        <end position="177"/>
    </location>
</feature>
<feature type="region of interest" description="Mediates transcriptional activity" evidence="1">
    <location>
        <begin position="258"/>
        <end position="382"/>
    </location>
</feature>
<feature type="short sequence motif" description="Nuclear localization signal" evidence="1">
    <location>
        <begin position="167"/>
        <end position="183"/>
    </location>
</feature>
<feature type="compositionally biased region" description="Acidic residues" evidence="3">
    <location>
        <begin position="105"/>
        <end position="117"/>
    </location>
</feature>
<feature type="compositionally biased region" description="Acidic residues" evidence="3">
    <location>
        <begin position="203"/>
        <end position="215"/>
    </location>
</feature>
<feature type="modified residue" description="Phosphothreonine" evidence="2">
    <location>
        <position position="170"/>
    </location>
</feature>
<feature type="modified residue" description="Phosphoserine" evidence="2">
    <location>
        <position position="197"/>
    </location>
</feature>
<feature type="modified residue" description="Phosphothreonine" evidence="6">
    <location>
        <position position="203"/>
    </location>
</feature>
<feature type="modified residue" description="Phosphoserine" evidence="7">
    <location>
        <position position="225"/>
    </location>
</feature>
<feature type="cross-link" description="Glycyl lysine isopeptide (Lys-Gly) (interchain with G-Cter in SUMO2)" evidence="2">
    <location>
        <position position="216"/>
    </location>
</feature>
<feature type="sequence conflict" description="In Ref. 1; BAC26058." evidence="5" ref="1">
    <original>D</original>
    <variation>N</variation>
    <location>
        <position position="100"/>
    </location>
</feature>
<feature type="sequence conflict" description="In Ref. 1; BAE32269." evidence="5" ref="1">
    <original>S</original>
    <variation>SE</variation>
    <location>
        <position position="105"/>
    </location>
</feature>
<feature type="sequence conflict" description="In Ref. 1; BAE39775." evidence="5" ref="1">
    <original>M</original>
    <variation>I</variation>
    <location>
        <position position="230"/>
    </location>
</feature>
<feature type="sequence conflict" description="In Ref. 2; AAH66169." evidence="5" ref="2">
    <original>K</original>
    <variation>R</variation>
    <location>
        <position position="360"/>
    </location>
</feature>
<feature type="helix" evidence="8">
    <location>
        <begin position="253"/>
        <end position="255"/>
    </location>
</feature>
<feature type="helix" evidence="8">
    <location>
        <begin position="258"/>
        <end position="262"/>
    </location>
</feature>
<feature type="helix" evidence="8">
    <location>
        <begin position="268"/>
        <end position="270"/>
    </location>
</feature>
<feature type="turn" evidence="8">
    <location>
        <begin position="275"/>
        <end position="277"/>
    </location>
</feature>
<feature type="turn" evidence="8">
    <location>
        <begin position="282"/>
        <end position="284"/>
    </location>
</feature>
<feature type="strand" evidence="8">
    <location>
        <begin position="287"/>
        <end position="291"/>
    </location>
</feature>
<feature type="turn" evidence="8">
    <location>
        <begin position="302"/>
        <end position="305"/>
    </location>
</feature>
<feature type="helix" evidence="8">
    <location>
        <begin position="309"/>
        <end position="316"/>
    </location>
</feature>
<feature type="helix" evidence="8">
    <location>
        <begin position="320"/>
        <end position="324"/>
    </location>
</feature>
<feature type="turn" evidence="8">
    <location>
        <begin position="332"/>
        <end position="336"/>
    </location>
</feature>
<feature type="helix" evidence="8">
    <location>
        <begin position="343"/>
        <end position="345"/>
    </location>
</feature>
<name>CDCA7_MOUSE</name>